<gene>
    <name evidence="1" type="primary">rpsT</name>
    <name type="ordered locus">PERMA_0399</name>
</gene>
<comment type="function">
    <text evidence="1">Binds directly to 16S ribosomal RNA.</text>
</comment>
<comment type="similarity">
    <text evidence="1">Belongs to the bacterial ribosomal protein bS20 family.</text>
</comment>
<evidence type="ECO:0000255" key="1">
    <source>
        <dbReference type="HAMAP-Rule" id="MF_00500"/>
    </source>
</evidence>
<evidence type="ECO:0000305" key="2"/>
<proteinExistence type="inferred from homology"/>
<reference key="1">
    <citation type="journal article" date="2009" name="J. Bacteriol.">
        <title>Complete and draft genome sequences of six members of the Aquificales.</title>
        <authorList>
            <person name="Reysenbach A.-L."/>
            <person name="Hamamura N."/>
            <person name="Podar M."/>
            <person name="Griffiths E."/>
            <person name="Ferreira S."/>
            <person name="Hochstein R."/>
            <person name="Heidelberg J."/>
            <person name="Johnson J."/>
            <person name="Mead D."/>
            <person name="Pohorille A."/>
            <person name="Sarmiento M."/>
            <person name="Schweighofer K."/>
            <person name="Seshadri R."/>
            <person name="Voytek M.A."/>
        </authorList>
    </citation>
    <scope>NUCLEOTIDE SEQUENCE [LARGE SCALE GENOMIC DNA]</scope>
    <source>
        <strain>DSM 14350 / EX-H1</strain>
    </source>
</reference>
<keyword id="KW-1185">Reference proteome</keyword>
<keyword id="KW-0687">Ribonucleoprotein</keyword>
<keyword id="KW-0689">Ribosomal protein</keyword>
<keyword id="KW-0694">RNA-binding</keyword>
<keyword id="KW-0699">rRNA-binding</keyword>
<feature type="chain" id="PRO_1000194257" description="Small ribosomal subunit protein bS20">
    <location>
        <begin position="1"/>
        <end position="92"/>
    </location>
</feature>
<name>RS20_PERMH</name>
<sequence length="92" mass="10578">MAHTRSAKKRIRQAEKRRLLNRYHISRMKTAIKRITEALKNKDIETAEKLLPLAQKLAYRAAAKGAIHKNEAARRVSRIYRKVNAAKASLSQ</sequence>
<organism>
    <name type="scientific">Persephonella marina (strain DSM 14350 / EX-H1)</name>
    <dbReference type="NCBI Taxonomy" id="123214"/>
    <lineage>
        <taxon>Bacteria</taxon>
        <taxon>Pseudomonadati</taxon>
        <taxon>Aquificota</taxon>
        <taxon>Aquificia</taxon>
        <taxon>Aquificales</taxon>
        <taxon>Hydrogenothermaceae</taxon>
        <taxon>Persephonella</taxon>
    </lineage>
</organism>
<accession>C0QU24</accession>
<dbReference type="EMBL" id="CP001230">
    <property type="protein sequence ID" value="ACO03365.1"/>
    <property type="molecule type" value="Genomic_DNA"/>
</dbReference>
<dbReference type="RefSeq" id="WP_012675604.1">
    <property type="nucleotide sequence ID" value="NC_012440.1"/>
</dbReference>
<dbReference type="SMR" id="C0QU24"/>
<dbReference type="STRING" id="123214.PERMA_0399"/>
<dbReference type="PaxDb" id="123214-PERMA_0399"/>
<dbReference type="KEGG" id="pmx:PERMA_0399"/>
<dbReference type="eggNOG" id="COG0268">
    <property type="taxonomic scope" value="Bacteria"/>
</dbReference>
<dbReference type="HOGENOM" id="CLU_160655_3_1_0"/>
<dbReference type="OrthoDB" id="9808392at2"/>
<dbReference type="Proteomes" id="UP000001366">
    <property type="component" value="Chromosome"/>
</dbReference>
<dbReference type="GO" id="GO:0005829">
    <property type="term" value="C:cytosol"/>
    <property type="evidence" value="ECO:0007669"/>
    <property type="project" value="TreeGrafter"/>
</dbReference>
<dbReference type="GO" id="GO:0015935">
    <property type="term" value="C:small ribosomal subunit"/>
    <property type="evidence" value="ECO:0007669"/>
    <property type="project" value="TreeGrafter"/>
</dbReference>
<dbReference type="GO" id="GO:0070181">
    <property type="term" value="F:small ribosomal subunit rRNA binding"/>
    <property type="evidence" value="ECO:0007669"/>
    <property type="project" value="TreeGrafter"/>
</dbReference>
<dbReference type="GO" id="GO:0003735">
    <property type="term" value="F:structural constituent of ribosome"/>
    <property type="evidence" value="ECO:0007669"/>
    <property type="project" value="InterPro"/>
</dbReference>
<dbReference type="GO" id="GO:0006412">
    <property type="term" value="P:translation"/>
    <property type="evidence" value="ECO:0007669"/>
    <property type="project" value="UniProtKB-UniRule"/>
</dbReference>
<dbReference type="Gene3D" id="1.20.58.110">
    <property type="entry name" value="Ribosomal protein S20"/>
    <property type="match status" value="1"/>
</dbReference>
<dbReference type="HAMAP" id="MF_00500">
    <property type="entry name" value="Ribosomal_bS20"/>
    <property type="match status" value="1"/>
</dbReference>
<dbReference type="InterPro" id="IPR002583">
    <property type="entry name" value="Ribosomal_bS20"/>
</dbReference>
<dbReference type="InterPro" id="IPR036510">
    <property type="entry name" value="Ribosomal_bS20_sf"/>
</dbReference>
<dbReference type="NCBIfam" id="TIGR00029">
    <property type="entry name" value="S20"/>
    <property type="match status" value="1"/>
</dbReference>
<dbReference type="PANTHER" id="PTHR33398">
    <property type="entry name" value="30S RIBOSOMAL PROTEIN S20"/>
    <property type="match status" value="1"/>
</dbReference>
<dbReference type="PANTHER" id="PTHR33398:SF1">
    <property type="entry name" value="SMALL RIBOSOMAL SUBUNIT PROTEIN BS20C"/>
    <property type="match status" value="1"/>
</dbReference>
<dbReference type="Pfam" id="PF01649">
    <property type="entry name" value="Ribosomal_S20p"/>
    <property type="match status" value="1"/>
</dbReference>
<dbReference type="SUPFAM" id="SSF46992">
    <property type="entry name" value="Ribosomal protein S20"/>
    <property type="match status" value="1"/>
</dbReference>
<protein>
    <recommendedName>
        <fullName evidence="1">Small ribosomal subunit protein bS20</fullName>
    </recommendedName>
    <alternativeName>
        <fullName evidence="2">30S ribosomal protein S20</fullName>
    </alternativeName>
</protein>